<gene>
    <name type="primary">pdhS</name>
    <name type="ordered locus">BruAb1_1593</name>
</gene>
<keyword id="KW-0067">ATP-binding</keyword>
<keyword id="KW-0131">Cell cycle</keyword>
<keyword id="KW-0132">Cell division</keyword>
<keyword id="KW-0963">Cytoplasm</keyword>
<keyword id="KW-0418">Kinase</keyword>
<keyword id="KW-0547">Nucleotide-binding</keyword>
<keyword id="KW-0597">Phosphoprotein</keyword>
<keyword id="KW-0808">Transferase</keyword>
<comment type="function">
    <text evidence="4">Functions as a polar differentiation marker. Essential protein that, by localizing in the old pole of dividing cells, controls cell division and maturation, probably through control of DivK phosphorylation status and cellular distribution, which in turn regulates CtrA, a transcriptional regulator of the minB operon. The asymmetrical localization of this protein is probably required for cells to enter a new division cycle.</text>
</comment>
<comment type="catalytic activity">
    <reaction>
        <text>ATP + protein L-histidine = ADP + protein N-phospho-L-histidine.</text>
        <dbReference type="EC" id="2.7.13.3"/>
    </reaction>
</comment>
<comment type="subunit">
    <text evidence="4">Interacts with DivK.</text>
</comment>
<comment type="subcellular location">
    <subcellularLocation>
        <location evidence="4">Cytoplasm</location>
    </subcellularLocation>
    <text>Localizes at the old pole of dividing cells. Colocalizes with DivK.</text>
</comment>
<feature type="chain" id="PRO_0000361898" description="Cell-division control histidine kinase PdhS">
    <location>
        <begin position="1"/>
        <end position="1035"/>
    </location>
</feature>
<feature type="domain" description="PAS" evidence="2">
    <location>
        <begin position="659"/>
        <end position="730"/>
    </location>
</feature>
<feature type="domain" description="Histidine kinase" evidence="1">
    <location>
        <begin position="802"/>
        <end position="1031"/>
    </location>
</feature>
<feature type="region of interest" description="Important for polar localization">
    <location>
        <begin position="1"/>
        <end position="613"/>
    </location>
</feature>
<feature type="region of interest" description="Disordered" evidence="3">
    <location>
        <begin position="500"/>
        <end position="533"/>
    </location>
</feature>
<feature type="region of interest" description="Interaction with DivK">
    <location>
        <begin position="614"/>
        <end position="1035"/>
    </location>
</feature>
<feature type="modified residue" description="Phosphohistidine; by autocatalysis" evidence="1">
    <location>
        <position position="805"/>
    </location>
</feature>
<sequence length="1035" mass="111804">MSGSYPFIDIAALDSVREGFARGDAQLVLAHDLSTVLWVNGPGAKLFGYNRVEDLIEGQLDLPVATRRQIAAFSSENTSAPSAVAVRLGGGLRSELTHLHVSNIKLPDGVAALLVATQMPDNSAEAAISGLGDDSTHIALVDAVGKVVAASPRFALLDISASTLEDLIVEAGDATDRIVKRRIRTGSHSVPGAIARLTDTPALHLLCIVGDAPAQFQTAAEAVPLPDNAEAVLEEILPEQGDAPAQQAQKTHAEQPRPKTFAFDHDAPPARFIWKVGPDGTFSEISPNLAAVVGPNSADIVGRRFSDVANVFGFDTDGSIAALLLERDTWSGKRLLWPVEGTRLRVPVELAALPVYSRDREFLGFRGFGIVRPAEAEADPEEIGLALAGGIPQNRKPRKEPAETARMVGEDDVLALSEEVANDDQPAAVLPKPPLDITPTPGRRDSDKVISLLNSCAQEKVAADQAKFLKEKERATRPEGGLTKTERNAFREIAERLRKQGLANTRAESETPVSETSSIEPVEPTPPVKTRSEPIQPDETALLANLPVPVIIHSGDAIHYVNQALLDITGYESLDDIRSAGGVDVLFNSESDDGETRQSMLLRHADGSEEPVDAHLNAIAWRGGRALMLSLMPVTAADLPAPAELPAANDEEKQALEAHVEELKTILDTATDGVVLIDPEGRIRSMNHSASALFGYERDEAEGKFFSMLFAIESQRAAMDYLHGLSGNGVLSVLNDGREVIGREAKGGFIPLFMTIGKLPHTRGFCAVLRDITQWKRTEEELTNARKEAERASNQKTEFLARISHEIRTPLNAIIGFSELMADEKFGPIGNDRYRDYLRDINRSGNHVLALVNDLLDISKIEAGALDMQFEAVSLNDAIGEAIALMQPQANRERVIIRSSFQSNLPDIVADSRSIKQVALNLLSNAVRFTAPGGQVIVSTSYELNGDVVMRVRDTGIGMSKSEVEQALKPFRQINALERRKAESAKDWRNEGTGLGLPLTKAMVEANRAQFAIDSNPGQGTVVEIVFPPTRVLAD</sequence>
<proteinExistence type="evidence at protein level"/>
<evidence type="ECO:0000255" key="1">
    <source>
        <dbReference type="PROSITE-ProRule" id="PRU00107"/>
    </source>
</evidence>
<evidence type="ECO:0000255" key="2">
    <source>
        <dbReference type="PROSITE-ProRule" id="PRU00140"/>
    </source>
</evidence>
<evidence type="ECO:0000256" key="3">
    <source>
        <dbReference type="SAM" id="MobiDB-lite"/>
    </source>
</evidence>
<evidence type="ECO:0000269" key="4">
    <source>
    </source>
</evidence>
<dbReference type="EC" id="2.7.13.3"/>
<dbReference type="EMBL" id="AE017223">
    <property type="protein sequence ID" value="AAX74918.1"/>
    <property type="molecule type" value="Genomic_DNA"/>
</dbReference>
<dbReference type="RefSeq" id="WP_002966929.1">
    <property type="nucleotide sequence ID" value="NC_006932.1"/>
</dbReference>
<dbReference type="SMR" id="Q57BR6"/>
<dbReference type="IntAct" id="Q57BR6">
    <property type="interactions" value="1"/>
</dbReference>
<dbReference type="MINT" id="Q57BR6"/>
<dbReference type="EnsemblBacteria" id="AAX74918">
    <property type="protein sequence ID" value="AAX74918"/>
    <property type="gene ID" value="BruAb1_1593"/>
</dbReference>
<dbReference type="GeneID" id="93016129"/>
<dbReference type="KEGG" id="bmb:BruAb1_1593"/>
<dbReference type="HOGENOM" id="CLU_000445_23_0_5"/>
<dbReference type="Proteomes" id="UP000000540">
    <property type="component" value="Chromosome I"/>
</dbReference>
<dbReference type="GO" id="GO:0005737">
    <property type="term" value="C:cytoplasm"/>
    <property type="evidence" value="ECO:0007669"/>
    <property type="project" value="UniProtKB-SubCell"/>
</dbReference>
<dbReference type="GO" id="GO:0005886">
    <property type="term" value="C:plasma membrane"/>
    <property type="evidence" value="ECO:0007669"/>
    <property type="project" value="TreeGrafter"/>
</dbReference>
<dbReference type="GO" id="GO:0005524">
    <property type="term" value="F:ATP binding"/>
    <property type="evidence" value="ECO:0007669"/>
    <property type="project" value="UniProtKB-KW"/>
</dbReference>
<dbReference type="GO" id="GO:0009927">
    <property type="term" value="F:histidine phosphotransfer kinase activity"/>
    <property type="evidence" value="ECO:0007669"/>
    <property type="project" value="TreeGrafter"/>
</dbReference>
<dbReference type="GO" id="GO:0000155">
    <property type="term" value="F:phosphorelay sensor kinase activity"/>
    <property type="evidence" value="ECO:0007669"/>
    <property type="project" value="InterPro"/>
</dbReference>
<dbReference type="GO" id="GO:0051301">
    <property type="term" value="P:cell division"/>
    <property type="evidence" value="ECO:0007669"/>
    <property type="project" value="UniProtKB-KW"/>
</dbReference>
<dbReference type="GO" id="GO:0006355">
    <property type="term" value="P:regulation of DNA-templated transcription"/>
    <property type="evidence" value="ECO:0007669"/>
    <property type="project" value="InterPro"/>
</dbReference>
<dbReference type="CDD" id="cd00082">
    <property type="entry name" value="HisKA"/>
    <property type="match status" value="1"/>
</dbReference>
<dbReference type="CDD" id="cd00130">
    <property type="entry name" value="PAS"/>
    <property type="match status" value="1"/>
</dbReference>
<dbReference type="Gene3D" id="1.10.287.130">
    <property type="match status" value="1"/>
</dbReference>
<dbReference type="Gene3D" id="3.30.565.10">
    <property type="entry name" value="Histidine kinase-like ATPase, C-terminal domain"/>
    <property type="match status" value="1"/>
</dbReference>
<dbReference type="Gene3D" id="3.30.450.20">
    <property type="entry name" value="PAS domain"/>
    <property type="match status" value="1"/>
</dbReference>
<dbReference type="InterPro" id="IPR036890">
    <property type="entry name" value="HATPase_C_sf"/>
</dbReference>
<dbReference type="InterPro" id="IPR005467">
    <property type="entry name" value="His_kinase_dom"/>
</dbReference>
<dbReference type="InterPro" id="IPR003661">
    <property type="entry name" value="HisK_dim/P_dom"/>
</dbReference>
<dbReference type="InterPro" id="IPR036097">
    <property type="entry name" value="HisK_dim/P_sf"/>
</dbReference>
<dbReference type="InterPro" id="IPR000014">
    <property type="entry name" value="PAS"/>
</dbReference>
<dbReference type="InterPro" id="IPR035965">
    <property type="entry name" value="PAS-like_dom_sf"/>
</dbReference>
<dbReference type="InterPro" id="IPR013767">
    <property type="entry name" value="PAS_fold"/>
</dbReference>
<dbReference type="InterPro" id="IPR048231">
    <property type="entry name" value="PdhS_histid_kinase"/>
</dbReference>
<dbReference type="InterPro" id="IPR004358">
    <property type="entry name" value="Sig_transdc_His_kin-like_C"/>
</dbReference>
<dbReference type="NCBIfam" id="NF041593">
    <property type="entry name" value="histid_kinase_PdhS"/>
    <property type="match status" value="1"/>
</dbReference>
<dbReference type="NCBIfam" id="TIGR00229">
    <property type="entry name" value="sensory_box"/>
    <property type="match status" value="1"/>
</dbReference>
<dbReference type="PANTHER" id="PTHR43047:SF72">
    <property type="entry name" value="OSMOSENSING HISTIDINE PROTEIN KINASE SLN1"/>
    <property type="match status" value="1"/>
</dbReference>
<dbReference type="PANTHER" id="PTHR43047">
    <property type="entry name" value="TWO-COMPONENT HISTIDINE PROTEIN KINASE"/>
    <property type="match status" value="1"/>
</dbReference>
<dbReference type="Pfam" id="PF02518">
    <property type="entry name" value="HATPase_c"/>
    <property type="match status" value="1"/>
</dbReference>
<dbReference type="Pfam" id="PF00512">
    <property type="entry name" value="HisKA"/>
    <property type="match status" value="1"/>
</dbReference>
<dbReference type="Pfam" id="PF00989">
    <property type="entry name" value="PAS"/>
    <property type="match status" value="1"/>
</dbReference>
<dbReference type="Pfam" id="PF13188">
    <property type="entry name" value="PAS_8"/>
    <property type="match status" value="1"/>
</dbReference>
<dbReference type="PRINTS" id="PR00344">
    <property type="entry name" value="BCTRLSENSOR"/>
</dbReference>
<dbReference type="SMART" id="SM00387">
    <property type="entry name" value="HATPase_c"/>
    <property type="match status" value="1"/>
</dbReference>
<dbReference type="SMART" id="SM00388">
    <property type="entry name" value="HisKA"/>
    <property type="match status" value="1"/>
</dbReference>
<dbReference type="SMART" id="SM00091">
    <property type="entry name" value="PAS"/>
    <property type="match status" value="2"/>
</dbReference>
<dbReference type="SUPFAM" id="SSF55874">
    <property type="entry name" value="ATPase domain of HSP90 chaperone/DNA topoisomerase II/histidine kinase"/>
    <property type="match status" value="1"/>
</dbReference>
<dbReference type="SUPFAM" id="SSF47384">
    <property type="entry name" value="Homodimeric domain of signal transducing histidine kinase"/>
    <property type="match status" value="1"/>
</dbReference>
<dbReference type="SUPFAM" id="SSF55785">
    <property type="entry name" value="PYP-like sensor domain (PAS domain)"/>
    <property type="match status" value="1"/>
</dbReference>
<dbReference type="PROSITE" id="PS50109">
    <property type="entry name" value="HIS_KIN"/>
    <property type="match status" value="1"/>
</dbReference>
<dbReference type="PROSITE" id="PS50112">
    <property type="entry name" value="PAS"/>
    <property type="match status" value="1"/>
</dbReference>
<reference key="1">
    <citation type="journal article" date="2005" name="J. Bacteriol.">
        <title>Completion of the genome sequence of Brucella abortus and comparison to the highly similar genomes of Brucella melitensis and Brucella suis.</title>
        <authorList>
            <person name="Halling S.M."/>
            <person name="Peterson-Burch B.D."/>
            <person name="Bricker B.J."/>
            <person name="Zuerner R.L."/>
            <person name="Qing Z."/>
            <person name="Li L.-L."/>
            <person name="Kapur V."/>
            <person name="Alt D.P."/>
            <person name="Olsen S.C."/>
        </authorList>
    </citation>
    <scope>NUCLEOTIDE SEQUENCE [LARGE SCALE GENOMIC DNA]</scope>
    <source>
        <strain>9-941</strain>
    </source>
</reference>
<reference key="2">
    <citation type="journal article" date="2007" name="EMBO J.">
        <title>The asymmetric distribution of the essential histidine kinase PdhS indicates a differentiation event in Brucella abortus.</title>
        <authorList>
            <person name="Hallez R."/>
            <person name="Mignolet J."/>
            <person name="Van Mullem V."/>
            <person name="Wery M."/>
            <person name="Vandenhaute J."/>
            <person name="Letesson J.-J."/>
            <person name="Jacobs-Wagner C."/>
            <person name="De Bolle X."/>
        </authorList>
    </citation>
    <scope>FUNCTION IN CONTROL OF CELL DIVISION</scope>
    <scope>INTERACTION WITH DIVK</scope>
    <scope>SUBCELLULAR LOCATION</scope>
    <source>
        <strain>544 / Biovar 1</strain>
    </source>
</reference>
<name>PDHS_BRUAB</name>
<organism>
    <name type="scientific">Brucella abortus biovar 1 (strain 9-941)</name>
    <dbReference type="NCBI Taxonomy" id="262698"/>
    <lineage>
        <taxon>Bacteria</taxon>
        <taxon>Pseudomonadati</taxon>
        <taxon>Pseudomonadota</taxon>
        <taxon>Alphaproteobacteria</taxon>
        <taxon>Hyphomicrobiales</taxon>
        <taxon>Brucellaceae</taxon>
        <taxon>Brucella/Ochrobactrum group</taxon>
        <taxon>Brucella</taxon>
    </lineage>
</organism>
<protein>
    <recommendedName>
        <fullName>Cell-division control histidine kinase PdhS</fullName>
        <ecNumber>2.7.13.3</ecNumber>
    </recommendedName>
    <alternativeName>
        <fullName>PleC-DivJ homolog sensor</fullName>
    </alternativeName>
</protein>
<accession>Q57BR6</accession>